<feature type="signal peptide" evidence="2">
    <location>
        <begin position="1"/>
        <end position="18"/>
    </location>
</feature>
<feature type="propeptide" id="PRO_0000010285">
    <location>
        <begin position="19"/>
        <end position="35"/>
    </location>
</feature>
<feature type="peptide" id="PRO_0000010286" description="Maximin-S1">
    <location>
        <begin position="36"/>
        <end position="49"/>
    </location>
</feature>
<feature type="propeptide" id="PRO_0000010287">
    <location>
        <begin position="52"/>
        <end position="65"/>
    </location>
</feature>
<feature type="peptide" id="PRO_0000010288" description="Maximin-S3">
    <location>
        <begin position="66"/>
        <end position="83"/>
    </location>
</feature>
<feature type="propeptide" id="PRO_0000010289">
    <location>
        <begin position="87"/>
        <end position="100"/>
    </location>
</feature>
<feature type="peptide" id="PRO_0000010290" description="Maximin-S5">
    <location>
        <begin position="101"/>
        <end position="118"/>
    </location>
</feature>
<feature type="propeptide" id="PRO_0000010291">
    <location>
        <begin position="122"/>
        <end position="135"/>
    </location>
</feature>
<feature type="peptide" id="PRO_0000010292" description="Maximin-S2">
    <location>
        <begin position="136"/>
        <end position="153"/>
    </location>
</feature>
<feature type="propeptide" id="PRO_0000010293">
    <location>
        <begin position="157"/>
        <end position="170"/>
    </location>
</feature>
<feature type="peptide" id="PRO_0000010294" description="Maximin-S3">
    <location>
        <begin position="171"/>
        <end position="188"/>
    </location>
</feature>
<feature type="propeptide" id="PRO_0000010295">
    <location>
        <begin position="192"/>
        <end position="205"/>
    </location>
</feature>
<feature type="peptide" id="PRO_0000010296" description="Maximin-S4">
    <location>
        <begin position="206"/>
        <end position="223"/>
    </location>
</feature>
<feature type="propeptide" id="PRO_0000010297">
    <location>
        <begin position="227"/>
        <end position="240"/>
    </location>
</feature>
<feature type="peptide" id="PRO_0000010298" description="Maximin-S5">
    <location>
        <begin position="241"/>
        <end position="258"/>
    </location>
</feature>
<feature type="propeptide" id="PRO_0000010299">
    <location>
        <begin position="262"/>
        <end position="270"/>
    </location>
</feature>
<feature type="modified residue" description="Asparagine amide" evidence="3">
    <location>
        <position position="83"/>
    </location>
</feature>
<feature type="modified residue" description="Lysine amide" evidence="3">
    <location>
        <position position="118"/>
    </location>
</feature>
<feature type="modified residue" description="Asparagine amide" evidence="3">
    <location>
        <position position="153"/>
    </location>
</feature>
<feature type="modified residue" description="Asparagine amide" evidence="3">
    <location>
        <position position="188"/>
    </location>
</feature>
<feature type="modified residue" description="Lysine amide" evidence="3">
    <location>
        <position position="223"/>
    </location>
</feature>
<feature type="modified residue" description="Lysine amide" evidence="3">
    <location>
        <position position="258"/>
    </location>
</feature>
<accession>Q5GC91</accession>
<sequence length="270" mass="30375">MNFNYFILVLFFITSGHAKSETREVHQEAENHIKRGSNTGFNFKTLDKEKRSAEEQNLAEHLVTRGSNKGFNFMVDMINALSNGKRSAEEQDLAEDLVTRGSNKGFNFMVDMIQALSKGKRSAEDQDLAEDLVTRGSNKGFNFMVDMIQALSNGKRSAEEQDLAEHLVTRGSNKGFNFMVDMINALSNGKRSAEEQDLVEDLVTRRSNKGFNFMVDMIQALSKGKRSAEEQDLAEDLVTRGSNKGFNFMVDMIQALSKGKRSAEQEKDMK</sequence>
<keyword id="KW-0027">Amidation</keyword>
<keyword id="KW-0044">Antibiotic</keyword>
<keyword id="KW-0929">Antimicrobial</keyword>
<keyword id="KW-0165">Cleavage on pair of basic residues</keyword>
<keyword id="KW-0964">Secreted</keyword>
<keyword id="KW-0732">Signal</keyword>
<proteinExistence type="evidence at protein level"/>
<organism>
    <name type="scientific">Bombina maxima</name>
    <name type="common">Giant fire-bellied toad</name>
    <name type="synonym">Chinese red belly toad</name>
    <dbReference type="NCBI Taxonomy" id="161274"/>
    <lineage>
        <taxon>Eukaryota</taxon>
        <taxon>Metazoa</taxon>
        <taxon>Chordata</taxon>
        <taxon>Craniata</taxon>
        <taxon>Vertebrata</taxon>
        <taxon>Euteleostomi</taxon>
        <taxon>Amphibia</taxon>
        <taxon>Batrachia</taxon>
        <taxon>Anura</taxon>
        <taxon>Bombinatoridae</taxon>
        <taxon>Bombina</taxon>
    </lineage>
</organism>
<name>MAXSD_BOMMX</name>
<evidence type="ECO:0000250" key="1"/>
<evidence type="ECO:0000255" key="2"/>
<evidence type="ECO:0000269" key="3">
    <source>
    </source>
</evidence>
<evidence type="ECO:0000305" key="4"/>
<comment type="function">
    <text>Maximin-S1 has no antimicrobial activity. Has no hemolytic activity.</text>
</comment>
<comment type="function">
    <text evidence="1">Maximin-S2 has an activity against mycoplasma but has no activity against common Gram-positive and Gram-negative bacteria nor fungi. Has no hemolytic activity (By similarity).</text>
</comment>
<comment type="function">
    <text evidence="1">Maximin-S3 has an activity against mycoplasma but has no activity against common Gram-positive and Gram-negative bacteria nor fungi. Has no hemolytic activity (By similarity).</text>
</comment>
<comment type="function">
    <text>Maximin-S4 has an activity against mycoplasma but has no activity against common Gram-positive and Gram-negative bacteria nor fungi. Has no hemolytic activity.</text>
</comment>
<comment type="function">
    <text evidence="1">Maximin-S5 has an activity against mycoplasma but has no activity against common Gram-positive and Gram-negative bacteria nor fungi. Has no hemolytic activity (By similarity).</text>
</comment>
<comment type="subcellular location">
    <subcellularLocation>
        <location>Secreted</location>
    </subcellularLocation>
</comment>
<comment type="tissue specificity">
    <text>Expressed by the skin dorsal glands.</text>
</comment>
<comment type="mass spectrometry" mass="1973.92" method="MALDI" evidence="3">
    <molecule>Maximin-S3</molecule>
    <text>Maximin-S2.</text>
</comment>
<comment type="mass spectrometry" mass="1959.22" method="MALDI" evidence="3">
    <molecule>Maximin-S5</molecule>
    <text>Maximin-S3.</text>
</comment>
<comment type="mass spectrometry" mass="2087.9" method="MALDI" evidence="3">
    <molecule>Maximin-S3</molecule>
    <text>Maximin-S4.</text>
</comment>
<comment type="mass spectrometry" mass="1987.08" method="MALDI" evidence="3">
    <molecule>Maximin-S4</molecule>
    <text>Maximin-S5.</text>
</comment>
<comment type="similarity">
    <text evidence="4">Belongs to the maximin-S family.</text>
</comment>
<dbReference type="EMBL" id="AY652774">
    <property type="protein sequence ID" value="AAV97982.1"/>
    <property type="molecule type" value="mRNA"/>
</dbReference>
<dbReference type="SMR" id="Q5GC91"/>
<dbReference type="GO" id="GO:0005576">
    <property type="term" value="C:extracellular region"/>
    <property type="evidence" value="ECO:0007669"/>
    <property type="project" value="UniProtKB-SubCell"/>
</dbReference>
<dbReference type="GO" id="GO:0042742">
    <property type="term" value="P:defense response to bacterium"/>
    <property type="evidence" value="ECO:0007669"/>
    <property type="project" value="UniProtKB-KW"/>
</dbReference>
<reference key="1">
    <citation type="journal article" date="2005" name="Biochem. Biophys. Res. Commun.">
        <title>Maximins S, a novel group of antimicrobial peptides from toad Bombina maxima.</title>
        <authorList>
            <person name="Wang T."/>
            <person name="Zhang J."/>
            <person name="Shen J.-H."/>
            <person name="Jin Y."/>
            <person name="Lee W.-H."/>
            <person name="Zhang Y."/>
        </authorList>
    </citation>
    <scope>NUCLEOTIDE SEQUENCE [MRNA]</scope>
    <scope>SYNTHESIS OF MAXIMIN-S1</scope>
    <scope>SYNTHESIS OF MAXIMIN-S4</scope>
    <scope>AMIDATION AT ASN-83; LYS-118; ASN-153; ASN-188; LYS-223 AND LYS-258</scope>
    <scope>MASS SPECTROMETRY</scope>
    <source>
        <tissue>Skin</tissue>
        <tissue>Skin secretion</tissue>
    </source>
</reference>
<protein>
    <recommendedName>
        <fullName>Maximins-S type D</fullName>
    </recommendedName>
    <component>
        <recommendedName>
            <fullName>Maximin-S1</fullName>
        </recommendedName>
    </component>
    <component>
        <recommendedName>
            <fullName>Maximin-S3</fullName>
        </recommendedName>
    </component>
    <component>
        <recommendedName>
            <fullName>Maximin-S5</fullName>
        </recommendedName>
    </component>
    <component>
        <recommendedName>
            <fullName>Maximin-S2</fullName>
        </recommendedName>
    </component>
    <component>
        <recommendedName>
            <fullName>Maximin-S4</fullName>
        </recommendedName>
    </component>
</protein>